<organism>
    <name type="scientific">Oryza sativa subsp. japonica</name>
    <name type="common">Rice</name>
    <dbReference type="NCBI Taxonomy" id="39947"/>
    <lineage>
        <taxon>Eukaryota</taxon>
        <taxon>Viridiplantae</taxon>
        <taxon>Streptophyta</taxon>
        <taxon>Embryophyta</taxon>
        <taxon>Tracheophyta</taxon>
        <taxon>Spermatophyta</taxon>
        <taxon>Magnoliopsida</taxon>
        <taxon>Liliopsida</taxon>
        <taxon>Poales</taxon>
        <taxon>Poaceae</taxon>
        <taxon>BOP clade</taxon>
        <taxon>Oryzoideae</taxon>
        <taxon>Oryzeae</taxon>
        <taxon>Oryzinae</taxon>
        <taxon>Oryza</taxon>
        <taxon>Oryza sativa</taxon>
    </lineage>
</organism>
<accession>Q6Z4U2</accession>
<accession>A0A0P0XCU5</accession>
<comment type="function">
    <text evidence="1">May be involved in the splicing of group IIB introns in mitochondria.</text>
</comment>
<comment type="subunit">
    <text evidence="1">Part of large ribonucleo-protein complexes that include group IIB introns.</text>
</comment>
<comment type="subcellular location">
    <subcellularLocation>
        <location evidence="5">Mitochondrion</location>
    </subcellularLocation>
</comment>
<reference key="1">
    <citation type="journal article" date="2005" name="Nature">
        <title>The map-based sequence of the rice genome.</title>
        <authorList>
            <consortium name="International rice genome sequencing project (IRGSP)"/>
        </authorList>
    </citation>
    <scope>NUCLEOTIDE SEQUENCE [LARGE SCALE GENOMIC DNA]</scope>
    <source>
        <strain>cv. Nipponbare</strain>
    </source>
</reference>
<reference key="2">
    <citation type="journal article" date="2008" name="Nucleic Acids Res.">
        <title>The rice annotation project database (RAP-DB): 2008 update.</title>
        <authorList>
            <consortium name="The rice annotation project (RAP)"/>
        </authorList>
    </citation>
    <scope>GENOME REANNOTATION</scope>
    <source>
        <strain>cv. Nipponbare</strain>
    </source>
</reference>
<reference key="3">
    <citation type="journal article" date="2013" name="Rice">
        <title>Improvement of the Oryza sativa Nipponbare reference genome using next generation sequence and optical map data.</title>
        <authorList>
            <person name="Kawahara Y."/>
            <person name="de la Bastide M."/>
            <person name="Hamilton J.P."/>
            <person name="Kanamori H."/>
            <person name="McCombie W.R."/>
            <person name="Ouyang S."/>
            <person name="Schwartz D.C."/>
            <person name="Tanaka T."/>
            <person name="Wu J."/>
            <person name="Zhou S."/>
            <person name="Childs K.L."/>
            <person name="Davidson R.M."/>
            <person name="Lin H."/>
            <person name="Quesada-Ocampo L."/>
            <person name="Vaillancourt B."/>
            <person name="Sakai H."/>
            <person name="Lee S.S."/>
            <person name="Kim J."/>
            <person name="Numa H."/>
            <person name="Itoh T."/>
            <person name="Buell C.R."/>
            <person name="Matsumoto T."/>
        </authorList>
    </citation>
    <scope>GENOME REANNOTATION</scope>
    <source>
        <strain>cv. Nipponbare</strain>
    </source>
</reference>
<proteinExistence type="inferred from homology"/>
<evidence type="ECO:0000250" key="1"/>
<evidence type="ECO:0000255" key="2"/>
<evidence type="ECO:0000255" key="3">
    <source>
        <dbReference type="PROSITE-ProRule" id="PRU00626"/>
    </source>
</evidence>
<evidence type="ECO:0000256" key="4">
    <source>
        <dbReference type="SAM" id="MobiDB-lite"/>
    </source>
</evidence>
<evidence type="ECO:0000305" key="5"/>
<feature type="transit peptide" description="Mitochondrion" evidence="2">
    <location>
        <begin position="1"/>
        <end position="21"/>
    </location>
</feature>
<feature type="chain" id="PRO_0000283618" description="CRS2-associated factor 1, mitochondrial">
    <location>
        <begin position="22"/>
        <end position="428"/>
    </location>
</feature>
<feature type="domain" description="CRM 1" evidence="3">
    <location>
        <begin position="155"/>
        <end position="253"/>
    </location>
</feature>
<feature type="domain" description="CRM 2" evidence="3">
    <location>
        <begin position="275"/>
        <end position="371"/>
    </location>
</feature>
<feature type="region of interest" description="Disordered" evidence="4">
    <location>
        <begin position="33"/>
        <end position="100"/>
    </location>
</feature>
<feature type="region of interest" description="Disordered" evidence="4">
    <location>
        <begin position="129"/>
        <end position="152"/>
    </location>
</feature>
<feature type="region of interest" description="Disordered" evidence="4">
    <location>
        <begin position="378"/>
        <end position="428"/>
    </location>
</feature>
<feature type="compositionally biased region" description="Acidic residues" evidence="4">
    <location>
        <begin position="380"/>
        <end position="393"/>
    </location>
</feature>
<feature type="compositionally biased region" description="Polar residues" evidence="4">
    <location>
        <begin position="394"/>
        <end position="413"/>
    </location>
</feature>
<name>CAF1M_ORYSJ</name>
<keyword id="KW-0496">Mitochondrion</keyword>
<keyword id="KW-0507">mRNA processing</keyword>
<keyword id="KW-0508">mRNA splicing</keyword>
<keyword id="KW-1185">Reference proteome</keyword>
<keyword id="KW-0677">Repeat</keyword>
<keyword id="KW-0687">Ribonucleoprotein</keyword>
<keyword id="KW-0694">RNA-binding</keyword>
<keyword id="KW-0809">Transit peptide</keyword>
<sequence>MLLLAGLLRRARPPRRPSVRRLSGLLDRYGFVPPASLTPHSASDDGGAKKRRPKKPPYRPPSSLDRGGRPAARSDLPFDFRFSYTESSPGDKPIGLREPKYSPFGPGRLDRPWTGLCAPAVDTTLRDAHADDPAPAAERELEEARRRERERVLGEPLTPAERAFLVSKCQKSRTKKQINLGRDGLTHNMLNDIHNHWKNDEAVRVKCLGVPTVDMQNVCHQLEDKTGGLIIHRHGGQLILYRGRHYNPKKRPVIPLMLWKPAEPVYPRLIKTTIEGLTVEETKEMRKKGLYVPVLTKLAKNGYYASLVPMVRDAFLTDELVRIDSKGLPKSDYRKIGVKLRDLVPCIIVSFDKEQIIVWRGKDYNGTIQDNTQKTSVSVLEEESAGAESENGDQEQASSDWASDECSQLSSSDEMPDDKSAISEADSD</sequence>
<protein>
    <recommendedName>
        <fullName>CRS2-associated factor 1, mitochondrial</fullName>
    </recommendedName>
</protein>
<dbReference type="EMBL" id="AP003882">
    <property type="protein sequence ID" value="BAD05220.1"/>
    <property type="molecule type" value="Genomic_DNA"/>
</dbReference>
<dbReference type="EMBL" id="AP005164">
    <property type="protein sequence ID" value="BAD05547.1"/>
    <property type="molecule type" value="Genomic_DNA"/>
</dbReference>
<dbReference type="EMBL" id="AP008214">
    <property type="protein sequence ID" value="BAF23024.1"/>
    <property type="molecule type" value="Genomic_DNA"/>
</dbReference>
<dbReference type="EMBL" id="AP014964">
    <property type="protein sequence ID" value="BAT04054.1"/>
    <property type="molecule type" value="Genomic_DNA"/>
</dbReference>
<dbReference type="RefSeq" id="XP_015648634.1">
    <property type="nucleotide sequence ID" value="XM_015793148.1"/>
</dbReference>
<dbReference type="SMR" id="Q6Z4U2"/>
<dbReference type="FunCoup" id="Q6Z4U2">
    <property type="interactions" value="1841"/>
</dbReference>
<dbReference type="STRING" id="39947.Q6Z4U2"/>
<dbReference type="PaxDb" id="39947-Q6Z4U2"/>
<dbReference type="EnsemblPlants" id="Os08t0174900-01">
    <property type="protein sequence ID" value="Os08t0174900-01"/>
    <property type="gene ID" value="Os08g0174900"/>
</dbReference>
<dbReference type="Gramene" id="Os08t0174900-01">
    <property type="protein sequence ID" value="Os08t0174900-01"/>
    <property type="gene ID" value="Os08g0174900"/>
</dbReference>
<dbReference type="KEGG" id="dosa:Os08g0174900"/>
<dbReference type="eggNOG" id="ENOG502QQI8">
    <property type="taxonomic scope" value="Eukaryota"/>
</dbReference>
<dbReference type="HOGENOM" id="CLU_053415_1_0_1"/>
<dbReference type="InParanoid" id="Q6Z4U2"/>
<dbReference type="OMA" id="KWTGVCA"/>
<dbReference type="OrthoDB" id="1911210at2759"/>
<dbReference type="Proteomes" id="UP000000763">
    <property type="component" value="Chromosome 8"/>
</dbReference>
<dbReference type="Proteomes" id="UP000059680">
    <property type="component" value="Chromosome 8"/>
</dbReference>
<dbReference type="GO" id="GO:0005739">
    <property type="term" value="C:mitochondrion"/>
    <property type="evidence" value="ECO:0007669"/>
    <property type="project" value="UniProtKB-SubCell"/>
</dbReference>
<dbReference type="GO" id="GO:1990904">
    <property type="term" value="C:ribonucleoprotein complex"/>
    <property type="evidence" value="ECO:0007669"/>
    <property type="project" value="UniProtKB-KW"/>
</dbReference>
<dbReference type="GO" id="GO:0003723">
    <property type="term" value="F:RNA binding"/>
    <property type="evidence" value="ECO:0007669"/>
    <property type="project" value="UniProtKB-KW"/>
</dbReference>
<dbReference type="GO" id="GO:0000373">
    <property type="term" value="P:Group II intron splicing"/>
    <property type="evidence" value="ECO:0007669"/>
    <property type="project" value="InterPro"/>
</dbReference>
<dbReference type="GO" id="GO:0006397">
    <property type="term" value="P:mRNA processing"/>
    <property type="evidence" value="ECO:0007669"/>
    <property type="project" value="UniProtKB-KW"/>
</dbReference>
<dbReference type="FunFam" id="3.30.110.60:FF:000002">
    <property type="entry name" value="CRS2-associated factor 1, chloroplastic"/>
    <property type="match status" value="2"/>
</dbReference>
<dbReference type="Gene3D" id="3.30.110.60">
    <property type="entry name" value="YhbY-like"/>
    <property type="match status" value="2"/>
</dbReference>
<dbReference type="InterPro" id="IPR044599">
    <property type="entry name" value="CAF1P_plant"/>
</dbReference>
<dbReference type="InterPro" id="IPR001890">
    <property type="entry name" value="RNA-binding_CRM"/>
</dbReference>
<dbReference type="InterPro" id="IPR035920">
    <property type="entry name" value="YhbY-like_sf"/>
</dbReference>
<dbReference type="PANTHER" id="PTHR46247">
    <property type="entry name" value="CRS2-ASSOCIATED FACTOR 1, CHLOROPLASTIC"/>
    <property type="match status" value="1"/>
</dbReference>
<dbReference type="PANTHER" id="PTHR46247:SF2">
    <property type="entry name" value="CRS2-ASSOCIATED FACTOR 1, MITOCHONDRIAL"/>
    <property type="match status" value="1"/>
</dbReference>
<dbReference type="Pfam" id="PF01985">
    <property type="entry name" value="CRS1_YhbY"/>
    <property type="match status" value="2"/>
</dbReference>
<dbReference type="SMART" id="SM01103">
    <property type="entry name" value="CRS1_YhbY"/>
    <property type="match status" value="2"/>
</dbReference>
<dbReference type="SUPFAM" id="SSF75471">
    <property type="entry name" value="YhbY-like"/>
    <property type="match status" value="2"/>
</dbReference>
<dbReference type="PROSITE" id="PS51295">
    <property type="entry name" value="CRM"/>
    <property type="match status" value="2"/>
</dbReference>
<gene>
    <name type="ordered locus">Os08g0174900</name>
    <name type="ordered locus">LOC_Os08g07790</name>
    <name type="ORF">OJ1134_B10.1</name>
    <name type="ORF">OSJNBa0054L03.32</name>
</gene>